<proteinExistence type="inferred from homology"/>
<accession>Q8TST1</accession>
<gene>
    <name evidence="1" type="primary">cofD</name>
    <name type="ordered locus">MA_0714</name>
</gene>
<keyword id="KW-0460">Magnesium</keyword>
<keyword id="KW-1185">Reference proteome</keyword>
<keyword id="KW-0808">Transferase</keyword>
<organism>
    <name type="scientific">Methanosarcina acetivorans (strain ATCC 35395 / DSM 2834 / JCM 12185 / C2A)</name>
    <dbReference type="NCBI Taxonomy" id="188937"/>
    <lineage>
        <taxon>Archaea</taxon>
        <taxon>Methanobacteriati</taxon>
        <taxon>Methanobacteriota</taxon>
        <taxon>Stenosarchaea group</taxon>
        <taxon>Methanomicrobia</taxon>
        <taxon>Methanosarcinales</taxon>
        <taxon>Methanosarcinaceae</taxon>
        <taxon>Methanosarcina</taxon>
    </lineage>
</organism>
<reference key="1">
    <citation type="journal article" date="2002" name="Genome Res.">
        <title>The genome of Methanosarcina acetivorans reveals extensive metabolic and physiological diversity.</title>
        <authorList>
            <person name="Galagan J.E."/>
            <person name="Nusbaum C."/>
            <person name="Roy A."/>
            <person name="Endrizzi M.G."/>
            <person name="Macdonald P."/>
            <person name="FitzHugh W."/>
            <person name="Calvo S."/>
            <person name="Engels R."/>
            <person name="Smirnov S."/>
            <person name="Atnoor D."/>
            <person name="Brown A."/>
            <person name="Allen N."/>
            <person name="Naylor J."/>
            <person name="Stange-Thomann N."/>
            <person name="DeArellano K."/>
            <person name="Johnson R."/>
            <person name="Linton L."/>
            <person name="McEwan P."/>
            <person name="McKernan K."/>
            <person name="Talamas J."/>
            <person name="Tirrell A."/>
            <person name="Ye W."/>
            <person name="Zimmer A."/>
            <person name="Barber R.D."/>
            <person name="Cann I."/>
            <person name="Graham D.E."/>
            <person name="Grahame D.A."/>
            <person name="Guss A.M."/>
            <person name="Hedderich R."/>
            <person name="Ingram-Smith C."/>
            <person name="Kuettner H.C."/>
            <person name="Krzycki J.A."/>
            <person name="Leigh J.A."/>
            <person name="Li W."/>
            <person name="Liu J."/>
            <person name="Mukhopadhyay B."/>
            <person name="Reeve J.N."/>
            <person name="Smith K."/>
            <person name="Springer T.A."/>
            <person name="Umayam L.A."/>
            <person name="White O."/>
            <person name="White R.H."/>
            <person name="de Macario E.C."/>
            <person name="Ferry J.G."/>
            <person name="Jarrell K.F."/>
            <person name="Jing H."/>
            <person name="Macario A.J.L."/>
            <person name="Paulsen I.T."/>
            <person name="Pritchett M."/>
            <person name="Sowers K.R."/>
            <person name="Swanson R.V."/>
            <person name="Zinder S.H."/>
            <person name="Lander E."/>
            <person name="Metcalf W.W."/>
            <person name="Birren B."/>
        </authorList>
    </citation>
    <scope>NUCLEOTIDE SEQUENCE [LARGE SCALE GENOMIC DNA]</scope>
    <source>
        <strain>ATCC 35395 / DSM 2834 / JCM 12185 / C2A</strain>
    </source>
</reference>
<evidence type="ECO:0000255" key="1">
    <source>
        <dbReference type="HAMAP-Rule" id="MF_01257"/>
    </source>
</evidence>
<evidence type="ECO:0000305" key="2"/>
<dbReference type="EC" id="2.7.8.28" evidence="1"/>
<dbReference type="EMBL" id="AE010299">
    <property type="protein sequence ID" value="AAM04154.1"/>
    <property type="status" value="ALT_INIT"/>
    <property type="molecule type" value="Genomic_DNA"/>
</dbReference>
<dbReference type="RefSeq" id="WP_048066127.1">
    <property type="nucleotide sequence ID" value="NC_003552.1"/>
</dbReference>
<dbReference type="SMR" id="Q8TST1"/>
<dbReference type="FunCoup" id="Q8TST1">
    <property type="interactions" value="94"/>
</dbReference>
<dbReference type="STRING" id="188937.MA_0714"/>
<dbReference type="EnsemblBacteria" id="AAM04154">
    <property type="protein sequence ID" value="AAM04154"/>
    <property type="gene ID" value="MA_0714"/>
</dbReference>
<dbReference type="GeneID" id="1472606"/>
<dbReference type="KEGG" id="mac:MA_0714"/>
<dbReference type="HOGENOM" id="CLU_055795_1_0_2"/>
<dbReference type="InParanoid" id="Q8TST1"/>
<dbReference type="OrthoDB" id="59563at2157"/>
<dbReference type="PhylomeDB" id="Q8TST1"/>
<dbReference type="UniPathway" id="UPA00071"/>
<dbReference type="Proteomes" id="UP000002487">
    <property type="component" value="Chromosome"/>
</dbReference>
<dbReference type="GO" id="GO:0043743">
    <property type="term" value="F:LPPG:FO 2-phospho-L-lactate transferase activity"/>
    <property type="evidence" value="ECO:0000318"/>
    <property type="project" value="GO_Central"/>
</dbReference>
<dbReference type="GO" id="GO:0000287">
    <property type="term" value="F:magnesium ion binding"/>
    <property type="evidence" value="ECO:0007669"/>
    <property type="project" value="InterPro"/>
</dbReference>
<dbReference type="GO" id="GO:0052645">
    <property type="term" value="P:F420-0 metabolic process"/>
    <property type="evidence" value="ECO:0007669"/>
    <property type="project" value="UniProtKB-UniRule"/>
</dbReference>
<dbReference type="CDD" id="cd07186">
    <property type="entry name" value="CofD_like"/>
    <property type="match status" value="1"/>
</dbReference>
<dbReference type="Gene3D" id="1.10.8.240">
    <property type="entry name" value="CofD-like domain"/>
    <property type="match status" value="1"/>
</dbReference>
<dbReference type="Gene3D" id="3.40.50.10680">
    <property type="entry name" value="CofD-like domains"/>
    <property type="match status" value="1"/>
</dbReference>
<dbReference type="HAMAP" id="MF_01257">
    <property type="entry name" value="CofD"/>
    <property type="match status" value="1"/>
</dbReference>
<dbReference type="InterPro" id="IPR002882">
    <property type="entry name" value="CofD"/>
</dbReference>
<dbReference type="InterPro" id="IPR038136">
    <property type="entry name" value="CofD-like_dom_sf"/>
</dbReference>
<dbReference type="InterPro" id="IPR010115">
    <property type="entry name" value="FbiA/CofD"/>
</dbReference>
<dbReference type="NCBIfam" id="TIGR01819">
    <property type="entry name" value="F420_cofD"/>
    <property type="match status" value="1"/>
</dbReference>
<dbReference type="PANTHER" id="PTHR43007">
    <property type="entry name" value="2-PHOSPHO-L-LACTATE TRANSFERASE"/>
    <property type="match status" value="1"/>
</dbReference>
<dbReference type="PANTHER" id="PTHR43007:SF1">
    <property type="entry name" value="2-PHOSPHO-L-LACTATE TRANSFERASE"/>
    <property type="match status" value="1"/>
</dbReference>
<dbReference type="Pfam" id="PF01933">
    <property type="entry name" value="CofD"/>
    <property type="match status" value="1"/>
</dbReference>
<dbReference type="SUPFAM" id="SSF142338">
    <property type="entry name" value="CofD-like"/>
    <property type="match status" value="1"/>
</dbReference>
<name>COFD_METAC</name>
<feature type="chain" id="PRO_0000145771" description="2-phospho-L-lactate transferase">
    <location>
        <begin position="1"/>
        <end position="307"/>
    </location>
</feature>
<feature type="binding site" evidence="1">
    <location>
        <position position="48"/>
    </location>
    <ligand>
        <name>7,8-didemethyl-8-hydroxy-5-deazariboflavin</name>
        <dbReference type="ChEBI" id="CHEBI:59904"/>
    </ligand>
</feature>
<feature type="binding site" evidence="1">
    <location>
        <position position="87"/>
    </location>
    <ligand>
        <name>7,8-didemethyl-8-hydroxy-5-deazariboflavin</name>
        <dbReference type="ChEBI" id="CHEBI:59904"/>
    </ligand>
</feature>
<protein>
    <recommendedName>
        <fullName evidence="1">2-phospho-L-lactate transferase</fullName>
        <ecNumber evidence="1">2.7.8.28</ecNumber>
    </recommendedName>
</protein>
<sequence length="307" mass="33816">MIILSGGTGTPKLLDGLKEILPLEELTVVVNTAEDLWVSGNLISPDLDTVLYLFSDQIDRKKWWGIENDTFRTYERMHELGIEESMKLGDRDRATHIIRSNLIRGGTSLTEATVKLASLFGIDANILPMSDDPVSTYVETLQGVMHFQDFWVGKHGDPDVLGVDIRGVSEASVAKKVLEAFEKDDNVLIGPSNPITSIGPIISLPGMRELLKRKKVIAVSPIIGNAPVSGPAGKLMQACGLEVSSMGVAEYYQEFLDVFVFDERDRADEFAFERLGCRASRADTLMTSTEKSRELAEFVVGLFDTVC</sequence>
<comment type="function">
    <text evidence="1">Catalyzes the transfer of the 2-phospholactate moiety from (2S)-lactyl-2-diphospho-5'-guanosine to 7,8-didemethyl-8-hydroxy-5-deazariboflavin (FO) with the formation of oxidized coenzyme F420-0 and GMP.</text>
</comment>
<comment type="catalytic activity">
    <reaction evidence="1">
        <text>(2S)-lactyl-2-diphospho-5'-guanosine + 7,8-didemethyl-8-hydroxy-5-deazariboflavin = oxidized coenzyme F420-0 + GMP + H(+)</text>
        <dbReference type="Rhea" id="RHEA:63444"/>
        <dbReference type="ChEBI" id="CHEBI:15378"/>
        <dbReference type="ChEBI" id="CHEBI:58115"/>
        <dbReference type="ChEBI" id="CHEBI:59435"/>
        <dbReference type="ChEBI" id="CHEBI:59904"/>
        <dbReference type="ChEBI" id="CHEBI:59907"/>
        <dbReference type="EC" id="2.7.8.28"/>
    </reaction>
</comment>
<comment type="cofactor">
    <cofactor evidence="1">
        <name>Mg(2+)</name>
        <dbReference type="ChEBI" id="CHEBI:18420"/>
    </cofactor>
</comment>
<comment type="pathway">
    <text evidence="1">Cofactor biosynthesis; coenzyme F420 biosynthesis.</text>
</comment>
<comment type="subunit">
    <text evidence="1">Homodimer.</text>
</comment>
<comment type="similarity">
    <text evidence="1">Belongs to the CofD family.</text>
</comment>
<comment type="sequence caution" evidence="2">
    <conflict type="erroneous initiation">
        <sequence resource="EMBL-CDS" id="AAM04154"/>
    </conflict>
</comment>